<organism>
    <name type="scientific">Escherichia coli O157:H7</name>
    <dbReference type="NCBI Taxonomy" id="83334"/>
    <lineage>
        <taxon>Bacteria</taxon>
        <taxon>Pseudomonadati</taxon>
        <taxon>Pseudomonadota</taxon>
        <taxon>Gammaproteobacteria</taxon>
        <taxon>Enterobacterales</taxon>
        <taxon>Enterobacteriaceae</taxon>
        <taxon>Escherichia</taxon>
    </lineage>
</organism>
<keyword id="KW-0963">Cytoplasm</keyword>
<keyword id="KW-0671">Queuosine biosynthesis</keyword>
<keyword id="KW-1185">Reference proteome</keyword>
<keyword id="KW-0949">S-adenosyl-L-methionine</keyword>
<keyword id="KW-0808">Transferase</keyword>
<protein>
    <recommendedName>
        <fullName evidence="1">S-adenosylmethionine:tRNA ribosyltransferase-isomerase</fullName>
        <ecNumber evidence="1">2.4.99.17</ecNumber>
    </recommendedName>
    <alternativeName>
        <fullName evidence="1">Queuosine biosynthesis protein QueA</fullName>
    </alternativeName>
</protein>
<comment type="function">
    <text evidence="1">Transfers and isomerizes the ribose moiety from AdoMet to the 7-aminomethyl group of 7-deazaguanine (preQ1-tRNA) to give epoxyqueuosine (oQ-tRNA).</text>
</comment>
<comment type="catalytic activity">
    <reaction evidence="1">
        <text>7-aminomethyl-7-carbaguanosine(34) in tRNA + S-adenosyl-L-methionine = epoxyqueuosine(34) in tRNA + adenine + L-methionine + 2 H(+)</text>
        <dbReference type="Rhea" id="RHEA:32155"/>
        <dbReference type="Rhea" id="RHEA-COMP:10342"/>
        <dbReference type="Rhea" id="RHEA-COMP:18582"/>
        <dbReference type="ChEBI" id="CHEBI:15378"/>
        <dbReference type="ChEBI" id="CHEBI:16708"/>
        <dbReference type="ChEBI" id="CHEBI:57844"/>
        <dbReference type="ChEBI" id="CHEBI:59789"/>
        <dbReference type="ChEBI" id="CHEBI:82833"/>
        <dbReference type="ChEBI" id="CHEBI:194443"/>
        <dbReference type="EC" id="2.4.99.17"/>
    </reaction>
</comment>
<comment type="pathway">
    <text evidence="1">tRNA modification; tRNA-queuosine biosynthesis.</text>
</comment>
<comment type="subunit">
    <text evidence="1">Monomer.</text>
</comment>
<comment type="subcellular location">
    <subcellularLocation>
        <location evidence="1">Cytoplasm</location>
    </subcellularLocation>
</comment>
<comment type="similarity">
    <text evidence="1">Belongs to the QueA family.</text>
</comment>
<gene>
    <name evidence="1" type="primary">queA</name>
    <name type="ordered locus">Z0504</name>
    <name type="ordered locus">ECs0456</name>
</gene>
<proteinExistence type="inferred from homology"/>
<evidence type="ECO:0000255" key="1">
    <source>
        <dbReference type="HAMAP-Rule" id="MF_00113"/>
    </source>
</evidence>
<sequence length="356" mass="39431">MRVTDFSFELPESLIAHYPMPERSSCRLLSLDGPTGALTHGTFTDLLDKLNPGDLLVFNNTRVIPARLFGRKASGGKIEVLVERMLDDKRILAHIRASKAPKPGAELLLGDDESINATMTARHGALFEVEFNDERSVLDILNSIGHMPLPPYIDRPDEDADRELYQTVYSEKPGAVAAPTAGLHFDEPLLEKLRAKGVEMAFVTLHVGAGTFQPVRVDTIEDHIMHSEYAEVPQDVVDAVLAAKARGNRVIAVGTTSVRSLESAAQAAKNDLIEPFFDDTQIFIYPGFQYKVVDALVTNFHLPESTLIMLVSAFAGYQHTMNAYKAAVEEKYRFFSYGDAMFITYNPQAINERVGE</sequence>
<reference key="1">
    <citation type="journal article" date="2001" name="Nature">
        <title>Genome sequence of enterohaemorrhagic Escherichia coli O157:H7.</title>
        <authorList>
            <person name="Perna N.T."/>
            <person name="Plunkett G. III"/>
            <person name="Burland V."/>
            <person name="Mau B."/>
            <person name="Glasner J.D."/>
            <person name="Rose D.J."/>
            <person name="Mayhew G.F."/>
            <person name="Evans P.S."/>
            <person name="Gregor J."/>
            <person name="Kirkpatrick H.A."/>
            <person name="Posfai G."/>
            <person name="Hackett J."/>
            <person name="Klink S."/>
            <person name="Boutin A."/>
            <person name="Shao Y."/>
            <person name="Miller L."/>
            <person name="Grotbeck E.J."/>
            <person name="Davis N.W."/>
            <person name="Lim A."/>
            <person name="Dimalanta E.T."/>
            <person name="Potamousis K."/>
            <person name="Apodaca J."/>
            <person name="Anantharaman T.S."/>
            <person name="Lin J."/>
            <person name="Yen G."/>
            <person name="Schwartz D.C."/>
            <person name="Welch R.A."/>
            <person name="Blattner F.R."/>
        </authorList>
    </citation>
    <scope>NUCLEOTIDE SEQUENCE [LARGE SCALE GENOMIC DNA]</scope>
    <source>
        <strain>O157:H7 / EDL933 / ATCC 700927 / EHEC</strain>
    </source>
</reference>
<reference key="2">
    <citation type="journal article" date="2001" name="DNA Res.">
        <title>Complete genome sequence of enterohemorrhagic Escherichia coli O157:H7 and genomic comparison with a laboratory strain K-12.</title>
        <authorList>
            <person name="Hayashi T."/>
            <person name="Makino K."/>
            <person name="Ohnishi M."/>
            <person name="Kurokawa K."/>
            <person name="Ishii K."/>
            <person name="Yokoyama K."/>
            <person name="Han C.-G."/>
            <person name="Ohtsubo E."/>
            <person name="Nakayama K."/>
            <person name="Murata T."/>
            <person name="Tanaka M."/>
            <person name="Tobe T."/>
            <person name="Iida T."/>
            <person name="Takami H."/>
            <person name="Honda T."/>
            <person name="Sasakawa C."/>
            <person name="Ogasawara N."/>
            <person name="Yasunaga T."/>
            <person name="Kuhara S."/>
            <person name="Shiba T."/>
            <person name="Hattori M."/>
            <person name="Shinagawa H."/>
        </authorList>
    </citation>
    <scope>NUCLEOTIDE SEQUENCE [LARGE SCALE GENOMIC DNA]</scope>
    <source>
        <strain>O157:H7 / Sakai / RIMD 0509952 / EHEC</strain>
    </source>
</reference>
<dbReference type="EC" id="2.4.99.17" evidence="1"/>
<dbReference type="EMBL" id="AE005174">
    <property type="protein sequence ID" value="AAG54752.1"/>
    <property type="molecule type" value="Genomic_DNA"/>
</dbReference>
<dbReference type="EMBL" id="BA000007">
    <property type="protein sequence ID" value="BAB33879.1"/>
    <property type="molecule type" value="Genomic_DNA"/>
</dbReference>
<dbReference type="PIR" id="D85536">
    <property type="entry name" value="D85536"/>
</dbReference>
<dbReference type="PIR" id="H90685">
    <property type="entry name" value="H90685"/>
</dbReference>
<dbReference type="RefSeq" id="NP_308483.1">
    <property type="nucleotide sequence ID" value="NC_002695.1"/>
</dbReference>
<dbReference type="RefSeq" id="WP_001266503.1">
    <property type="nucleotide sequence ID" value="NZ_VOAI01000005.1"/>
</dbReference>
<dbReference type="SMR" id="P0A7G0"/>
<dbReference type="STRING" id="155864.Z0504"/>
<dbReference type="GeneID" id="914558"/>
<dbReference type="GeneID" id="93777055"/>
<dbReference type="KEGG" id="ece:Z0504"/>
<dbReference type="KEGG" id="ecs:ECs_0456"/>
<dbReference type="PATRIC" id="fig|386585.9.peg.556"/>
<dbReference type="eggNOG" id="COG0809">
    <property type="taxonomic scope" value="Bacteria"/>
</dbReference>
<dbReference type="HOGENOM" id="CLU_039110_1_0_6"/>
<dbReference type="OMA" id="YSYGDGM"/>
<dbReference type="UniPathway" id="UPA00392"/>
<dbReference type="Proteomes" id="UP000000558">
    <property type="component" value="Chromosome"/>
</dbReference>
<dbReference type="Proteomes" id="UP000002519">
    <property type="component" value="Chromosome"/>
</dbReference>
<dbReference type="GO" id="GO:0005737">
    <property type="term" value="C:cytoplasm"/>
    <property type="evidence" value="ECO:0007669"/>
    <property type="project" value="UniProtKB-SubCell"/>
</dbReference>
<dbReference type="GO" id="GO:0051075">
    <property type="term" value="F:S-adenosylmethionine:tRNA ribosyltransferase-isomerase activity"/>
    <property type="evidence" value="ECO:0007669"/>
    <property type="project" value="UniProtKB-EC"/>
</dbReference>
<dbReference type="GO" id="GO:0008616">
    <property type="term" value="P:queuosine biosynthetic process"/>
    <property type="evidence" value="ECO:0007669"/>
    <property type="project" value="UniProtKB-UniRule"/>
</dbReference>
<dbReference type="GO" id="GO:0002099">
    <property type="term" value="P:tRNA wobble guanine modification"/>
    <property type="evidence" value="ECO:0007669"/>
    <property type="project" value="TreeGrafter"/>
</dbReference>
<dbReference type="FunFam" id="2.40.10.240:FF:000001">
    <property type="entry name" value="S-adenosylmethionine:tRNA ribosyltransferase-isomerase"/>
    <property type="match status" value="1"/>
</dbReference>
<dbReference type="FunFam" id="3.40.1780.10:FF:000001">
    <property type="entry name" value="S-adenosylmethionine:tRNA ribosyltransferase-isomerase"/>
    <property type="match status" value="1"/>
</dbReference>
<dbReference type="Gene3D" id="2.40.10.240">
    <property type="entry name" value="QueA-like"/>
    <property type="match status" value="1"/>
</dbReference>
<dbReference type="Gene3D" id="3.40.1780.10">
    <property type="entry name" value="QueA-like"/>
    <property type="match status" value="1"/>
</dbReference>
<dbReference type="HAMAP" id="MF_00113">
    <property type="entry name" value="QueA"/>
    <property type="match status" value="1"/>
</dbReference>
<dbReference type="InterPro" id="IPR003699">
    <property type="entry name" value="QueA"/>
</dbReference>
<dbReference type="InterPro" id="IPR042118">
    <property type="entry name" value="QueA_dom1"/>
</dbReference>
<dbReference type="InterPro" id="IPR042119">
    <property type="entry name" value="QueA_dom2"/>
</dbReference>
<dbReference type="InterPro" id="IPR036100">
    <property type="entry name" value="QueA_sf"/>
</dbReference>
<dbReference type="NCBIfam" id="NF001140">
    <property type="entry name" value="PRK00147.1"/>
    <property type="match status" value="1"/>
</dbReference>
<dbReference type="NCBIfam" id="TIGR00113">
    <property type="entry name" value="queA"/>
    <property type="match status" value="1"/>
</dbReference>
<dbReference type="PANTHER" id="PTHR30307">
    <property type="entry name" value="S-ADENOSYLMETHIONINE:TRNA RIBOSYLTRANSFERASE-ISOMERASE"/>
    <property type="match status" value="1"/>
</dbReference>
<dbReference type="PANTHER" id="PTHR30307:SF0">
    <property type="entry name" value="S-ADENOSYLMETHIONINE:TRNA RIBOSYLTRANSFERASE-ISOMERASE"/>
    <property type="match status" value="1"/>
</dbReference>
<dbReference type="Pfam" id="PF02547">
    <property type="entry name" value="Queuosine_synth"/>
    <property type="match status" value="1"/>
</dbReference>
<dbReference type="SUPFAM" id="SSF111337">
    <property type="entry name" value="QueA-like"/>
    <property type="match status" value="1"/>
</dbReference>
<feature type="chain" id="PRO_0000165401" description="S-adenosylmethionine:tRNA ribosyltransferase-isomerase">
    <location>
        <begin position="1"/>
        <end position="356"/>
    </location>
</feature>
<accession>P0A7G0</accession>
<accession>P21516</accession>
<name>QUEA_ECO57</name>